<protein>
    <recommendedName>
        <fullName evidence="1">Ferrochelatase</fullName>
        <ecNumber evidence="1">4.98.1.1</ecNumber>
    </recommendedName>
    <alternativeName>
        <fullName evidence="1">Heme synthase</fullName>
    </alternativeName>
    <alternativeName>
        <fullName evidence="1">Protoheme ferro-lyase</fullName>
    </alternativeName>
</protein>
<reference key="1">
    <citation type="journal article" date="2009" name="Appl. Environ. Microbiol.">
        <title>Three genomes from the phylum Acidobacteria provide insight into the lifestyles of these microorganisms in soils.</title>
        <authorList>
            <person name="Ward N.L."/>
            <person name="Challacombe J.F."/>
            <person name="Janssen P.H."/>
            <person name="Henrissat B."/>
            <person name="Coutinho P.M."/>
            <person name="Wu M."/>
            <person name="Xie G."/>
            <person name="Haft D.H."/>
            <person name="Sait M."/>
            <person name="Badger J."/>
            <person name="Barabote R.D."/>
            <person name="Bradley B."/>
            <person name="Brettin T.S."/>
            <person name="Brinkac L.M."/>
            <person name="Bruce D."/>
            <person name="Creasy T."/>
            <person name="Daugherty S.C."/>
            <person name="Davidsen T.M."/>
            <person name="DeBoy R.T."/>
            <person name="Detter J.C."/>
            <person name="Dodson R.J."/>
            <person name="Durkin A.S."/>
            <person name="Ganapathy A."/>
            <person name="Gwinn-Giglio M."/>
            <person name="Han C.S."/>
            <person name="Khouri H."/>
            <person name="Kiss H."/>
            <person name="Kothari S.P."/>
            <person name="Madupu R."/>
            <person name="Nelson K.E."/>
            <person name="Nelson W.C."/>
            <person name="Paulsen I."/>
            <person name="Penn K."/>
            <person name="Ren Q."/>
            <person name="Rosovitz M.J."/>
            <person name="Selengut J.D."/>
            <person name="Shrivastava S."/>
            <person name="Sullivan S.A."/>
            <person name="Tapia R."/>
            <person name="Thompson L.S."/>
            <person name="Watkins K.L."/>
            <person name="Yang Q."/>
            <person name="Yu C."/>
            <person name="Zafar N."/>
            <person name="Zhou L."/>
            <person name="Kuske C.R."/>
        </authorList>
    </citation>
    <scope>NUCLEOTIDE SEQUENCE [LARGE SCALE GENOMIC DNA]</scope>
    <source>
        <strain>ATCC 51196 / DSM 11244 / BCRC 80197 / JCM 7670 / NBRC 15755 / NCIMB 13165 / 161</strain>
    </source>
</reference>
<comment type="function">
    <text evidence="1">Catalyzes the ferrous insertion into protoporphyrin IX.</text>
</comment>
<comment type="catalytic activity">
    <reaction evidence="1">
        <text>heme b + 2 H(+) = protoporphyrin IX + Fe(2+)</text>
        <dbReference type="Rhea" id="RHEA:22584"/>
        <dbReference type="ChEBI" id="CHEBI:15378"/>
        <dbReference type="ChEBI" id="CHEBI:29033"/>
        <dbReference type="ChEBI" id="CHEBI:57306"/>
        <dbReference type="ChEBI" id="CHEBI:60344"/>
        <dbReference type="EC" id="4.98.1.1"/>
    </reaction>
</comment>
<comment type="pathway">
    <text evidence="1">Porphyrin-containing compound metabolism; protoheme biosynthesis; protoheme from protoporphyrin-IX: step 1/1.</text>
</comment>
<comment type="subcellular location">
    <subcellularLocation>
        <location evidence="1">Cytoplasm</location>
    </subcellularLocation>
</comment>
<comment type="similarity">
    <text evidence="1">Belongs to the ferrochelatase family.</text>
</comment>
<organism>
    <name type="scientific">Acidobacterium capsulatum (strain ATCC 51196 / DSM 11244 / BCRC 80197 / JCM 7670 / NBRC 15755 / NCIMB 13165 / 161)</name>
    <dbReference type="NCBI Taxonomy" id="240015"/>
    <lineage>
        <taxon>Bacteria</taxon>
        <taxon>Pseudomonadati</taxon>
        <taxon>Acidobacteriota</taxon>
        <taxon>Terriglobia</taxon>
        <taxon>Terriglobales</taxon>
        <taxon>Acidobacteriaceae</taxon>
        <taxon>Acidobacterium</taxon>
    </lineage>
</organism>
<feature type="chain" id="PRO_1000189978" description="Ferrochelatase">
    <location>
        <begin position="1"/>
        <end position="325"/>
    </location>
</feature>
<feature type="binding site" evidence="1">
    <location>
        <position position="172"/>
    </location>
    <ligand>
        <name>Fe cation</name>
        <dbReference type="ChEBI" id="CHEBI:24875"/>
    </ligand>
</feature>
<feature type="binding site" evidence="1">
    <location>
        <position position="267"/>
    </location>
    <ligand>
        <name>Fe cation</name>
        <dbReference type="ChEBI" id="CHEBI:24875"/>
    </ligand>
</feature>
<keyword id="KW-0963">Cytoplasm</keyword>
<keyword id="KW-0350">Heme biosynthesis</keyword>
<keyword id="KW-0408">Iron</keyword>
<keyword id="KW-0456">Lyase</keyword>
<keyword id="KW-0479">Metal-binding</keyword>
<keyword id="KW-0627">Porphyrin biosynthesis</keyword>
<keyword id="KW-1185">Reference proteome</keyword>
<dbReference type="EC" id="4.98.1.1" evidence="1"/>
<dbReference type="EMBL" id="CP001472">
    <property type="protein sequence ID" value="ACO33175.1"/>
    <property type="molecule type" value="Genomic_DNA"/>
</dbReference>
<dbReference type="RefSeq" id="WP_015897517.1">
    <property type="nucleotide sequence ID" value="NC_012483.1"/>
</dbReference>
<dbReference type="SMR" id="C1F1C7"/>
<dbReference type="FunCoup" id="C1F1C7">
    <property type="interactions" value="450"/>
</dbReference>
<dbReference type="STRING" id="240015.ACP_2433"/>
<dbReference type="KEGG" id="aca:ACP_2433"/>
<dbReference type="eggNOG" id="COG0276">
    <property type="taxonomic scope" value="Bacteria"/>
</dbReference>
<dbReference type="HOGENOM" id="CLU_018884_2_1_0"/>
<dbReference type="InParanoid" id="C1F1C7"/>
<dbReference type="OrthoDB" id="9776380at2"/>
<dbReference type="UniPathway" id="UPA00252">
    <property type="reaction ID" value="UER00325"/>
</dbReference>
<dbReference type="Proteomes" id="UP000002207">
    <property type="component" value="Chromosome"/>
</dbReference>
<dbReference type="GO" id="GO:0005737">
    <property type="term" value="C:cytoplasm"/>
    <property type="evidence" value="ECO:0007669"/>
    <property type="project" value="UniProtKB-SubCell"/>
</dbReference>
<dbReference type="GO" id="GO:0004325">
    <property type="term" value="F:ferrochelatase activity"/>
    <property type="evidence" value="ECO:0007669"/>
    <property type="project" value="UniProtKB-UniRule"/>
</dbReference>
<dbReference type="GO" id="GO:0046872">
    <property type="term" value="F:metal ion binding"/>
    <property type="evidence" value="ECO:0007669"/>
    <property type="project" value="UniProtKB-KW"/>
</dbReference>
<dbReference type="GO" id="GO:0006783">
    <property type="term" value="P:heme biosynthetic process"/>
    <property type="evidence" value="ECO:0007669"/>
    <property type="project" value="UniProtKB-UniRule"/>
</dbReference>
<dbReference type="CDD" id="cd00419">
    <property type="entry name" value="Ferrochelatase_C"/>
    <property type="match status" value="1"/>
</dbReference>
<dbReference type="CDD" id="cd03411">
    <property type="entry name" value="Ferrochelatase_N"/>
    <property type="match status" value="1"/>
</dbReference>
<dbReference type="Gene3D" id="3.40.50.1400">
    <property type="match status" value="2"/>
</dbReference>
<dbReference type="HAMAP" id="MF_00323">
    <property type="entry name" value="Ferrochelatase"/>
    <property type="match status" value="1"/>
</dbReference>
<dbReference type="InterPro" id="IPR001015">
    <property type="entry name" value="Ferrochelatase"/>
</dbReference>
<dbReference type="InterPro" id="IPR033644">
    <property type="entry name" value="Ferrochelatase_C"/>
</dbReference>
<dbReference type="InterPro" id="IPR033659">
    <property type="entry name" value="Ferrochelatase_N"/>
</dbReference>
<dbReference type="NCBIfam" id="TIGR00109">
    <property type="entry name" value="hemH"/>
    <property type="match status" value="1"/>
</dbReference>
<dbReference type="PANTHER" id="PTHR11108">
    <property type="entry name" value="FERROCHELATASE"/>
    <property type="match status" value="1"/>
</dbReference>
<dbReference type="PANTHER" id="PTHR11108:SF1">
    <property type="entry name" value="FERROCHELATASE, MITOCHONDRIAL"/>
    <property type="match status" value="1"/>
</dbReference>
<dbReference type="Pfam" id="PF00762">
    <property type="entry name" value="Ferrochelatase"/>
    <property type="match status" value="1"/>
</dbReference>
<dbReference type="SUPFAM" id="SSF53800">
    <property type="entry name" value="Chelatase"/>
    <property type="match status" value="1"/>
</dbReference>
<sequence length="325" mass="35622">MEERAAILLLAHGTPDSAEEIPEYLRNVVSGRPMPAEVIEEVRHRFVEIGGSPLTALTLQQGRLLQEALGLPVYVGMRNWKPYIADVVKQMVEDGITRAVAICLAPQNSRTSVGLYRRAVFAEAGQKMQIGFIEGWAEDDLLAAAFADRLRATWEPFRAEVGGPVPVLFTAHSVPCRTVQAPQPDPEAPRRPVLPPDPYNYEAKKTAMHVAAKVDGLDAWYFAFQSQGMSGGPWIGPTVEDTLTALHQEGIRHLVIQPVGFLCDHVEILYDIDIAFRDFAQNLGMMLRRPASLNDSPLLTAALARLAQSGLDRLQASEAPEPAAS</sequence>
<name>HEMH_ACIC5</name>
<gene>
    <name evidence="1" type="primary">hemH</name>
    <name type="ordered locus">ACP_2433</name>
</gene>
<evidence type="ECO:0000255" key="1">
    <source>
        <dbReference type="HAMAP-Rule" id="MF_00323"/>
    </source>
</evidence>
<accession>C1F1C7</accession>
<proteinExistence type="inferred from homology"/>